<gene>
    <name type="primary">gmt1</name>
    <name type="synonym">vrg4-1</name>
    <name type="ORF">NFIA_037370</name>
</gene>
<name>GMT1_NEOFI</name>
<sequence length="382" mass="41746">MADDKKTNEYTVEMDKLDHGNKNFEAPAPAVRPRGPPAAQLANNPILPVLAYCGSSILMTVMNKYVLSGTDFNLNFFLLCVQSIVCIVAIQTCKSSKLITYRDFNSDEAKKWFPITLLLIGMIYTGSKALQYLSIPVYTIFKNLTIILIAYGEVLWFGGSVTGMTLFSFGLMVLSSIIAAWADIKHAVESSGDATAKVSTLNAGYIWMLINCLCTSSYVLGMRKRIKLTNFKDFDTMFYNNLLSIPVLLVLTFLMEDWSSANIARNFPPADRNGILFAMILSGLSSVFISYTSAWCVRVTSSTTYSMVGALNKLPIALSGLIFFDAPVTFPSVSAIVVGFISGIVYAVAKIKQSAKPKTGVLPMSNPPVSASSQSMRDSLRS</sequence>
<protein>
    <recommendedName>
        <fullName>GDP-mannose transporter 1</fullName>
        <shortName>GMT 1</shortName>
    </recommendedName>
</protein>
<proteinExistence type="inferred from homology"/>
<dbReference type="EMBL" id="DS027686">
    <property type="protein sequence ID" value="EAW24163.1"/>
    <property type="molecule type" value="Genomic_DNA"/>
</dbReference>
<dbReference type="RefSeq" id="XP_001266060.1">
    <property type="nucleotide sequence ID" value="XM_001266059.1"/>
</dbReference>
<dbReference type="SMR" id="A1CZJ3"/>
<dbReference type="STRING" id="331117.A1CZJ3"/>
<dbReference type="EnsemblFungi" id="EAW24163">
    <property type="protein sequence ID" value="EAW24163"/>
    <property type="gene ID" value="NFIA_037370"/>
</dbReference>
<dbReference type="GeneID" id="4592417"/>
<dbReference type="KEGG" id="nfi:NFIA_037370"/>
<dbReference type="VEuPathDB" id="FungiDB:NFIA_037370"/>
<dbReference type="eggNOG" id="KOG1444">
    <property type="taxonomic scope" value="Eukaryota"/>
</dbReference>
<dbReference type="HOGENOM" id="CLU_025360_1_2_1"/>
<dbReference type="OMA" id="KLIRVWI"/>
<dbReference type="OrthoDB" id="417037at2759"/>
<dbReference type="Proteomes" id="UP000006702">
    <property type="component" value="Unassembled WGS sequence"/>
</dbReference>
<dbReference type="GO" id="GO:0030659">
    <property type="term" value="C:cytoplasmic vesicle membrane"/>
    <property type="evidence" value="ECO:0007669"/>
    <property type="project" value="UniProtKB-SubCell"/>
</dbReference>
<dbReference type="GO" id="GO:0005789">
    <property type="term" value="C:endoplasmic reticulum membrane"/>
    <property type="evidence" value="ECO:0007669"/>
    <property type="project" value="UniProtKB-SubCell"/>
</dbReference>
<dbReference type="GO" id="GO:0000139">
    <property type="term" value="C:Golgi membrane"/>
    <property type="evidence" value="ECO:0007669"/>
    <property type="project" value="UniProtKB-SubCell"/>
</dbReference>
<dbReference type="GO" id="GO:0055085">
    <property type="term" value="P:transmembrane transport"/>
    <property type="evidence" value="ECO:0007669"/>
    <property type="project" value="InterPro"/>
</dbReference>
<dbReference type="InterPro" id="IPR013657">
    <property type="entry name" value="SCL35B1-4/HUT1"/>
</dbReference>
<dbReference type="InterPro" id="IPR050186">
    <property type="entry name" value="TPT_transporter"/>
</dbReference>
<dbReference type="NCBIfam" id="TIGR00803">
    <property type="entry name" value="nst"/>
    <property type="match status" value="1"/>
</dbReference>
<dbReference type="PANTHER" id="PTHR11132">
    <property type="entry name" value="SOLUTE CARRIER FAMILY 35"/>
    <property type="match status" value="1"/>
</dbReference>
<dbReference type="Pfam" id="PF08449">
    <property type="entry name" value="UAA"/>
    <property type="match status" value="1"/>
</dbReference>
<dbReference type="SUPFAM" id="SSF103481">
    <property type="entry name" value="Multidrug resistance efflux transporter EmrE"/>
    <property type="match status" value="1"/>
</dbReference>
<keyword id="KW-0968">Cytoplasmic vesicle</keyword>
<keyword id="KW-0256">Endoplasmic reticulum</keyword>
<keyword id="KW-0333">Golgi apparatus</keyword>
<keyword id="KW-0472">Membrane</keyword>
<keyword id="KW-1185">Reference proteome</keyword>
<keyword id="KW-0762">Sugar transport</keyword>
<keyword id="KW-0812">Transmembrane</keyword>
<keyword id="KW-1133">Transmembrane helix</keyword>
<keyword id="KW-0813">Transport</keyword>
<accession>A1CZJ3</accession>
<organism>
    <name type="scientific">Neosartorya fischeri (strain ATCC 1020 / DSM 3700 / CBS 544.65 / FGSC A1164 / JCM 1740 / NRRL 181 / WB 181)</name>
    <name type="common">Aspergillus fischerianus</name>
    <dbReference type="NCBI Taxonomy" id="331117"/>
    <lineage>
        <taxon>Eukaryota</taxon>
        <taxon>Fungi</taxon>
        <taxon>Dikarya</taxon>
        <taxon>Ascomycota</taxon>
        <taxon>Pezizomycotina</taxon>
        <taxon>Eurotiomycetes</taxon>
        <taxon>Eurotiomycetidae</taxon>
        <taxon>Eurotiales</taxon>
        <taxon>Aspergillaceae</taxon>
        <taxon>Aspergillus</taxon>
        <taxon>Aspergillus subgen. Fumigati</taxon>
    </lineage>
</organism>
<comment type="function">
    <text evidence="1">Involved in the import of GDP-mannose from the cytoplasm into the Golgi lumen.</text>
</comment>
<comment type="subunit">
    <text evidence="1">Homooligomer.</text>
</comment>
<comment type="subcellular location">
    <subcellularLocation>
        <location evidence="1">Golgi apparatus membrane</location>
        <topology evidence="1">Multi-pass membrane protein</topology>
    </subcellularLocation>
    <subcellularLocation>
        <location evidence="1">Cytoplasmic vesicle membrane</location>
        <topology evidence="1">Multi-pass membrane protein</topology>
    </subcellularLocation>
    <subcellularLocation>
        <location evidence="1">Endoplasmic reticulum membrane</location>
        <topology evidence="1">Multi-pass membrane protein</topology>
    </subcellularLocation>
</comment>
<comment type="similarity">
    <text evidence="4">Belongs to the TPT transporter family. SLC35D subfamily.</text>
</comment>
<reference key="1">
    <citation type="journal article" date="2008" name="PLoS Genet.">
        <title>Genomic islands in the pathogenic filamentous fungus Aspergillus fumigatus.</title>
        <authorList>
            <person name="Fedorova N.D."/>
            <person name="Khaldi N."/>
            <person name="Joardar V.S."/>
            <person name="Maiti R."/>
            <person name="Amedeo P."/>
            <person name="Anderson M.J."/>
            <person name="Crabtree J."/>
            <person name="Silva J.C."/>
            <person name="Badger J.H."/>
            <person name="Albarraq A."/>
            <person name="Angiuoli S."/>
            <person name="Bussey H."/>
            <person name="Bowyer P."/>
            <person name="Cotty P.J."/>
            <person name="Dyer P.S."/>
            <person name="Egan A."/>
            <person name="Galens K."/>
            <person name="Fraser-Liggett C.M."/>
            <person name="Haas B.J."/>
            <person name="Inman J.M."/>
            <person name="Kent R."/>
            <person name="Lemieux S."/>
            <person name="Malavazi I."/>
            <person name="Orvis J."/>
            <person name="Roemer T."/>
            <person name="Ronning C.M."/>
            <person name="Sundaram J.P."/>
            <person name="Sutton G."/>
            <person name="Turner G."/>
            <person name="Venter J.C."/>
            <person name="White O.R."/>
            <person name="Whitty B.R."/>
            <person name="Youngman P."/>
            <person name="Wolfe K.H."/>
            <person name="Goldman G.H."/>
            <person name="Wortman J.R."/>
            <person name="Jiang B."/>
            <person name="Denning D.W."/>
            <person name="Nierman W.C."/>
        </authorList>
    </citation>
    <scope>NUCLEOTIDE SEQUENCE [LARGE SCALE GENOMIC DNA]</scope>
    <source>
        <strain>ATCC 1020 / DSM 3700 / CBS 544.65 / FGSC A1164 / JCM 1740 / NRRL 181 / WB 181</strain>
    </source>
</reference>
<feature type="chain" id="PRO_0000333529" description="GDP-mannose transporter 1">
    <location>
        <begin position="1"/>
        <end position="382"/>
    </location>
</feature>
<feature type="topological domain" description="Cytoplasmic" evidence="1">
    <location>
        <begin position="1"/>
        <end position="40"/>
    </location>
</feature>
<feature type="transmembrane region" description="Helical" evidence="2">
    <location>
        <begin position="41"/>
        <end position="61"/>
    </location>
</feature>
<feature type="topological domain" description="Lumenal" evidence="1">
    <location>
        <begin position="62"/>
        <end position="71"/>
    </location>
</feature>
<feature type="transmembrane region" description="Helical" evidence="2">
    <location>
        <begin position="72"/>
        <end position="92"/>
    </location>
</feature>
<feature type="topological domain" description="Cytoplasmic" evidence="1">
    <location>
        <begin position="93"/>
        <end position="110"/>
    </location>
</feature>
<feature type="transmembrane region" description="Helical" evidence="2">
    <location>
        <begin position="111"/>
        <end position="127"/>
    </location>
</feature>
<feature type="topological domain" description="Lumenal" evidence="1">
    <location>
        <begin position="128"/>
        <end position="134"/>
    </location>
</feature>
<feature type="transmembrane region" description="Helical" evidence="2">
    <location>
        <begin position="135"/>
        <end position="151"/>
    </location>
</feature>
<feature type="topological domain" description="Cytoplasmic" evidence="1">
    <location>
        <begin position="152"/>
        <end position="160"/>
    </location>
</feature>
<feature type="transmembrane region" description="Helical" evidence="2">
    <location>
        <begin position="161"/>
        <end position="182"/>
    </location>
</feature>
<feature type="topological domain" description="Lumenal" evidence="1">
    <location>
        <begin position="183"/>
        <end position="200"/>
    </location>
</feature>
<feature type="transmembrane region" description="Helical" evidence="2">
    <location>
        <begin position="201"/>
        <end position="221"/>
    </location>
</feature>
<feature type="topological domain" description="Cytoplasmic" evidence="1">
    <location>
        <begin position="222"/>
        <end position="233"/>
    </location>
</feature>
<feature type="transmembrane region" description="Helical" evidence="2">
    <location>
        <begin position="234"/>
        <end position="254"/>
    </location>
</feature>
<feature type="topological domain" description="Lumenal" evidence="1">
    <location>
        <begin position="255"/>
        <end position="274"/>
    </location>
</feature>
<feature type="transmembrane region" description="Helical" evidence="2">
    <location>
        <begin position="275"/>
        <end position="295"/>
    </location>
</feature>
<feature type="topological domain" description="Cytoplasmic" evidence="1">
    <location>
        <begin position="296"/>
        <end position="303"/>
    </location>
</feature>
<feature type="transmembrane region" description="Helical" evidence="2">
    <location>
        <begin position="304"/>
        <end position="324"/>
    </location>
</feature>
<feature type="topological domain" description="Lumenal" evidence="1">
    <location>
        <begin position="325"/>
        <end position="327"/>
    </location>
</feature>
<feature type="transmembrane region" description="Helical" evidence="2">
    <location>
        <begin position="328"/>
        <end position="348"/>
    </location>
</feature>
<feature type="topological domain" description="Cytoplasmic" evidence="1">
    <location>
        <begin position="349"/>
        <end position="382"/>
    </location>
</feature>
<feature type="region of interest" description="Disordered" evidence="3">
    <location>
        <begin position="358"/>
        <end position="382"/>
    </location>
</feature>
<feature type="compositionally biased region" description="Polar residues" evidence="3">
    <location>
        <begin position="367"/>
        <end position="382"/>
    </location>
</feature>
<evidence type="ECO:0000250" key="1"/>
<evidence type="ECO:0000255" key="2"/>
<evidence type="ECO:0000256" key="3">
    <source>
        <dbReference type="SAM" id="MobiDB-lite"/>
    </source>
</evidence>
<evidence type="ECO:0000305" key="4"/>